<dbReference type="EC" id="5.3.1.9" evidence="1"/>
<dbReference type="EMBL" id="CP000569">
    <property type="protein sequence ID" value="ABN74227.1"/>
    <property type="molecule type" value="Genomic_DNA"/>
</dbReference>
<dbReference type="RefSeq" id="WP_005601615.1">
    <property type="nucleotide sequence ID" value="NC_009053.1"/>
</dbReference>
<dbReference type="SMR" id="A3N1E1"/>
<dbReference type="STRING" id="416269.APL_1137"/>
<dbReference type="EnsemblBacteria" id="ABN74227">
    <property type="protein sequence ID" value="ABN74227"/>
    <property type="gene ID" value="APL_1137"/>
</dbReference>
<dbReference type="KEGG" id="apl:APL_1137"/>
<dbReference type="eggNOG" id="COG0166">
    <property type="taxonomic scope" value="Bacteria"/>
</dbReference>
<dbReference type="HOGENOM" id="CLU_017947_3_1_6"/>
<dbReference type="UniPathway" id="UPA00109">
    <property type="reaction ID" value="UER00181"/>
</dbReference>
<dbReference type="UniPathway" id="UPA00138"/>
<dbReference type="Proteomes" id="UP000001432">
    <property type="component" value="Chromosome"/>
</dbReference>
<dbReference type="GO" id="GO:0005829">
    <property type="term" value="C:cytosol"/>
    <property type="evidence" value="ECO:0007669"/>
    <property type="project" value="TreeGrafter"/>
</dbReference>
<dbReference type="GO" id="GO:0097367">
    <property type="term" value="F:carbohydrate derivative binding"/>
    <property type="evidence" value="ECO:0007669"/>
    <property type="project" value="InterPro"/>
</dbReference>
<dbReference type="GO" id="GO:0004347">
    <property type="term" value="F:glucose-6-phosphate isomerase activity"/>
    <property type="evidence" value="ECO:0007669"/>
    <property type="project" value="UniProtKB-UniRule"/>
</dbReference>
<dbReference type="GO" id="GO:0048029">
    <property type="term" value="F:monosaccharide binding"/>
    <property type="evidence" value="ECO:0007669"/>
    <property type="project" value="TreeGrafter"/>
</dbReference>
<dbReference type="GO" id="GO:0006094">
    <property type="term" value="P:gluconeogenesis"/>
    <property type="evidence" value="ECO:0007669"/>
    <property type="project" value="UniProtKB-UniRule"/>
</dbReference>
<dbReference type="GO" id="GO:0051156">
    <property type="term" value="P:glucose 6-phosphate metabolic process"/>
    <property type="evidence" value="ECO:0007669"/>
    <property type="project" value="TreeGrafter"/>
</dbReference>
<dbReference type="GO" id="GO:0006096">
    <property type="term" value="P:glycolytic process"/>
    <property type="evidence" value="ECO:0007669"/>
    <property type="project" value="UniProtKB-UniRule"/>
</dbReference>
<dbReference type="CDD" id="cd05015">
    <property type="entry name" value="SIS_PGI_1"/>
    <property type="match status" value="1"/>
</dbReference>
<dbReference type="CDD" id="cd05016">
    <property type="entry name" value="SIS_PGI_2"/>
    <property type="match status" value="1"/>
</dbReference>
<dbReference type="FunFam" id="1.10.1390.10:FF:000001">
    <property type="entry name" value="Glucose-6-phosphate isomerase"/>
    <property type="match status" value="1"/>
</dbReference>
<dbReference type="FunFam" id="3.40.50.10490:FF:000004">
    <property type="entry name" value="Glucose-6-phosphate isomerase"/>
    <property type="match status" value="1"/>
</dbReference>
<dbReference type="Gene3D" id="1.10.1390.10">
    <property type="match status" value="1"/>
</dbReference>
<dbReference type="Gene3D" id="3.40.50.10490">
    <property type="entry name" value="Glucose-6-phosphate isomerase like protein, domain 1"/>
    <property type="match status" value="2"/>
</dbReference>
<dbReference type="HAMAP" id="MF_00473">
    <property type="entry name" value="G6P_isomerase"/>
    <property type="match status" value="1"/>
</dbReference>
<dbReference type="InterPro" id="IPR001672">
    <property type="entry name" value="G6P_Isomerase"/>
</dbReference>
<dbReference type="InterPro" id="IPR023096">
    <property type="entry name" value="G6P_Isomerase_C"/>
</dbReference>
<dbReference type="InterPro" id="IPR018189">
    <property type="entry name" value="Phosphoglucose_isomerase_CS"/>
</dbReference>
<dbReference type="InterPro" id="IPR046348">
    <property type="entry name" value="SIS_dom_sf"/>
</dbReference>
<dbReference type="InterPro" id="IPR035476">
    <property type="entry name" value="SIS_PGI_1"/>
</dbReference>
<dbReference type="InterPro" id="IPR035482">
    <property type="entry name" value="SIS_PGI_2"/>
</dbReference>
<dbReference type="NCBIfam" id="NF001211">
    <property type="entry name" value="PRK00179.1"/>
    <property type="match status" value="1"/>
</dbReference>
<dbReference type="PANTHER" id="PTHR11469">
    <property type="entry name" value="GLUCOSE-6-PHOSPHATE ISOMERASE"/>
    <property type="match status" value="1"/>
</dbReference>
<dbReference type="PANTHER" id="PTHR11469:SF1">
    <property type="entry name" value="GLUCOSE-6-PHOSPHATE ISOMERASE"/>
    <property type="match status" value="1"/>
</dbReference>
<dbReference type="Pfam" id="PF00342">
    <property type="entry name" value="PGI"/>
    <property type="match status" value="1"/>
</dbReference>
<dbReference type="PRINTS" id="PR00662">
    <property type="entry name" value="G6PISOMERASE"/>
</dbReference>
<dbReference type="SUPFAM" id="SSF53697">
    <property type="entry name" value="SIS domain"/>
    <property type="match status" value="1"/>
</dbReference>
<dbReference type="PROSITE" id="PS00765">
    <property type="entry name" value="P_GLUCOSE_ISOMERASE_1"/>
    <property type="match status" value="1"/>
</dbReference>
<dbReference type="PROSITE" id="PS00174">
    <property type="entry name" value="P_GLUCOSE_ISOMERASE_2"/>
    <property type="match status" value="1"/>
</dbReference>
<dbReference type="PROSITE" id="PS51463">
    <property type="entry name" value="P_GLUCOSE_ISOMERASE_3"/>
    <property type="match status" value="1"/>
</dbReference>
<comment type="function">
    <text evidence="1">Catalyzes the reversible isomerization of glucose-6-phosphate to fructose-6-phosphate.</text>
</comment>
<comment type="catalytic activity">
    <reaction evidence="1">
        <text>alpha-D-glucose 6-phosphate = beta-D-fructose 6-phosphate</text>
        <dbReference type="Rhea" id="RHEA:11816"/>
        <dbReference type="ChEBI" id="CHEBI:57634"/>
        <dbReference type="ChEBI" id="CHEBI:58225"/>
        <dbReference type="EC" id="5.3.1.9"/>
    </reaction>
</comment>
<comment type="pathway">
    <text evidence="1">Carbohydrate biosynthesis; gluconeogenesis.</text>
</comment>
<comment type="pathway">
    <text evidence="1">Carbohydrate degradation; glycolysis; D-glyceraldehyde 3-phosphate and glycerone phosphate from D-glucose: step 2/4.</text>
</comment>
<comment type="subcellular location">
    <subcellularLocation>
        <location evidence="1">Cytoplasm</location>
    </subcellularLocation>
</comment>
<comment type="similarity">
    <text evidence="1">Belongs to the GPI family.</text>
</comment>
<reference key="1">
    <citation type="journal article" date="2008" name="J. Bacteriol.">
        <title>The complete genome sequence of Actinobacillus pleuropneumoniae L20 (serotype 5b).</title>
        <authorList>
            <person name="Foote S.J."/>
            <person name="Bosse J.T."/>
            <person name="Bouevitch A.B."/>
            <person name="Langford P.R."/>
            <person name="Young N.M."/>
            <person name="Nash J.H.E."/>
        </authorList>
    </citation>
    <scope>NUCLEOTIDE SEQUENCE [LARGE SCALE GENOMIC DNA]</scope>
    <source>
        <strain>L20</strain>
    </source>
</reference>
<accession>A3N1E1</accession>
<keyword id="KW-0963">Cytoplasm</keyword>
<keyword id="KW-0312">Gluconeogenesis</keyword>
<keyword id="KW-0324">Glycolysis</keyword>
<keyword id="KW-0413">Isomerase</keyword>
<keyword id="KW-1185">Reference proteome</keyword>
<evidence type="ECO:0000255" key="1">
    <source>
        <dbReference type="HAMAP-Rule" id="MF_00473"/>
    </source>
</evidence>
<feature type="chain" id="PRO_1000013936" description="Glucose-6-phosphate isomerase">
    <location>
        <begin position="1"/>
        <end position="546"/>
    </location>
</feature>
<feature type="active site" description="Proton donor" evidence="1">
    <location>
        <position position="353"/>
    </location>
</feature>
<feature type="active site" evidence="1">
    <location>
        <position position="384"/>
    </location>
</feature>
<feature type="active site" evidence="1">
    <location>
        <position position="512"/>
    </location>
</feature>
<sequence>MQNINPTQTAAWSALEQHKADNLNIPQLFAEDANRFDKYHLNFEQQILVDFSKNAINQKTLELLRQLANECGLASATEAMFSGQKINRTENRAVLHTALRNRSNTPVLVDGKDVMPEVNAVLAKMKDFCERIISGSWKGYTGKAITDVINIGIGGSDLGPYMVTEALRPYKNHLNMHFVSNVDGTHIAEVLKKVNPETTLVLVASKTFTTQETMTNALTAREWLLAAVKDESAVAKHFAALSTNAKEVAKFGIDTANMFEFWDWVGGRYSLWSAIGLSIALSLGFENFEALLSGAHAMDNHFRTAPIEKNIPTTLALIGIWNSNFLGAETEALLPYDQYLHRFAAYFQQGNMESNGKFVGRDGSPVTHQTGPIVWGEPGTNGQHAFYQLIHQGTKLIPCDFIAPAQTHNPVGDHHAKLLSNFFAQTEALAFGKSKETVEAEFVAAGKNLADVAEIVPFKVFTGNKPTNSILVQKITPFTLGALIAMYEHKIFVQGVIFNIYSFDQWGVELGKQLANRILPELQNAEKISSHDSSTNGLINQFKAWR</sequence>
<gene>
    <name evidence="1" type="primary">pgi</name>
    <name type="ordered locus">APL_1137</name>
</gene>
<organism>
    <name type="scientific">Actinobacillus pleuropneumoniae serotype 5b (strain L20)</name>
    <dbReference type="NCBI Taxonomy" id="416269"/>
    <lineage>
        <taxon>Bacteria</taxon>
        <taxon>Pseudomonadati</taxon>
        <taxon>Pseudomonadota</taxon>
        <taxon>Gammaproteobacteria</taxon>
        <taxon>Pasteurellales</taxon>
        <taxon>Pasteurellaceae</taxon>
        <taxon>Actinobacillus</taxon>
    </lineage>
</organism>
<name>G6PI_ACTP2</name>
<protein>
    <recommendedName>
        <fullName evidence="1">Glucose-6-phosphate isomerase</fullName>
        <shortName evidence="1">GPI</shortName>
        <ecNumber evidence="1">5.3.1.9</ecNumber>
    </recommendedName>
    <alternativeName>
        <fullName evidence="1">Phosphoglucose isomerase</fullName>
        <shortName evidence="1">PGI</shortName>
    </alternativeName>
    <alternativeName>
        <fullName evidence="1">Phosphohexose isomerase</fullName>
        <shortName evidence="1">PHI</shortName>
    </alternativeName>
</protein>
<proteinExistence type="inferred from homology"/>